<accession>Q9XEC7</accession>
<dbReference type="EC" id="2.7.11.-"/>
<dbReference type="EMBL" id="AF076243">
    <property type="protein sequence ID" value="AAD29762.1"/>
    <property type="molecule type" value="Genomic_DNA"/>
</dbReference>
<dbReference type="EMBL" id="AL161500">
    <property type="protein sequence ID" value="CAB77918.1"/>
    <property type="molecule type" value="Genomic_DNA"/>
</dbReference>
<dbReference type="EMBL" id="CP002687">
    <property type="protein sequence ID" value="AEE82395.1"/>
    <property type="molecule type" value="Genomic_DNA"/>
</dbReference>
<dbReference type="PIR" id="G85056">
    <property type="entry name" value="G85056"/>
</dbReference>
<dbReference type="RefSeq" id="NP_192359.1">
    <property type="nucleotide sequence ID" value="NM_116688.3"/>
</dbReference>
<dbReference type="SMR" id="Q9XEC7"/>
<dbReference type="BioGRID" id="11091">
    <property type="interactions" value="10"/>
</dbReference>
<dbReference type="IntAct" id="Q9XEC7">
    <property type="interactions" value="10"/>
</dbReference>
<dbReference type="STRING" id="3702.Q9XEC7"/>
<dbReference type="GlyCosmos" id="Q9XEC7">
    <property type="glycosylation" value="4 sites, No reported glycans"/>
</dbReference>
<dbReference type="GlyGen" id="Q9XEC7">
    <property type="glycosylation" value="5 sites"/>
</dbReference>
<dbReference type="iPTMnet" id="Q9XEC7"/>
<dbReference type="PaxDb" id="3702-AT4G04500.1"/>
<dbReference type="ProteomicsDB" id="222763"/>
<dbReference type="EnsemblPlants" id="AT4G04500.1">
    <property type="protein sequence ID" value="AT4G04500.1"/>
    <property type="gene ID" value="AT4G04500"/>
</dbReference>
<dbReference type="GeneID" id="825780"/>
<dbReference type="Gramene" id="AT4G04500.1">
    <property type="protein sequence ID" value="AT4G04500.1"/>
    <property type="gene ID" value="AT4G04500"/>
</dbReference>
<dbReference type="KEGG" id="ath:AT4G04500"/>
<dbReference type="Araport" id="AT4G04500"/>
<dbReference type="TAIR" id="AT4G04500">
    <property type="gene designation" value="CRK37"/>
</dbReference>
<dbReference type="eggNOG" id="ENOG502SE86">
    <property type="taxonomic scope" value="Eukaryota"/>
</dbReference>
<dbReference type="HOGENOM" id="CLU_000288_35_2_1"/>
<dbReference type="InParanoid" id="Q9XEC7"/>
<dbReference type="OMA" id="MILTATH"/>
<dbReference type="PhylomeDB" id="Q9XEC7"/>
<dbReference type="PRO" id="PR:Q9XEC7"/>
<dbReference type="Proteomes" id="UP000006548">
    <property type="component" value="Chromosome 4"/>
</dbReference>
<dbReference type="ExpressionAtlas" id="Q9XEC7">
    <property type="expression patterns" value="baseline and differential"/>
</dbReference>
<dbReference type="GO" id="GO:0016020">
    <property type="term" value="C:membrane"/>
    <property type="evidence" value="ECO:0007669"/>
    <property type="project" value="UniProtKB-SubCell"/>
</dbReference>
<dbReference type="GO" id="GO:0005524">
    <property type="term" value="F:ATP binding"/>
    <property type="evidence" value="ECO:0007669"/>
    <property type="project" value="UniProtKB-KW"/>
</dbReference>
<dbReference type="GO" id="GO:0106310">
    <property type="term" value="F:protein serine kinase activity"/>
    <property type="evidence" value="ECO:0007669"/>
    <property type="project" value="RHEA"/>
</dbReference>
<dbReference type="GO" id="GO:0004674">
    <property type="term" value="F:protein serine/threonine kinase activity"/>
    <property type="evidence" value="ECO:0007669"/>
    <property type="project" value="UniProtKB-KW"/>
</dbReference>
<dbReference type="CDD" id="cd23509">
    <property type="entry name" value="Gnk2-like"/>
    <property type="match status" value="2"/>
</dbReference>
<dbReference type="CDD" id="cd14066">
    <property type="entry name" value="STKc_IRAK"/>
    <property type="match status" value="1"/>
</dbReference>
<dbReference type="FunFam" id="3.30.200.20:FF:000142">
    <property type="entry name" value="Cysteine-rich receptor-like protein kinase 10"/>
    <property type="match status" value="1"/>
</dbReference>
<dbReference type="FunFam" id="3.30.430.20:FF:000007">
    <property type="entry name" value="Cysteine-rich receptor-like protein kinase 11"/>
    <property type="match status" value="1"/>
</dbReference>
<dbReference type="FunFam" id="1.10.510.10:FF:000343">
    <property type="entry name" value="Cysteine-rich receptor-like protein kinase 28"/>
    <property type="match status" value="1"/>
</dbReference>
<dbReference type="Gene3D" id="3.30.430.20">
    <property type="entry name" value="Gnk2 domain, C-X8-C-X2-C motif"/>
    <property type="match status" value="2"/>
</dbReference>
<dbReference type="Gene3D" id="3.30.200.20">
    <property type="entry name" value="Phosphorylase Kinase, domain 1"/>
    <property type="match status" value="1"/>
</dbReference>
<dbReference type="Gene3D" id="1.10.510.10">
    <property type="entry name" value="Transferase(Phosphotransferase) domain 1"/>
    <property type="match status" value="1"/>
</dbReference>
<dbReference type="InterPro" id="IPR002902">
    <property type="entry name" value="GNK2"/>
</dbReference>
<dbReference type="InterPro" id="IPR038408">
    <property type="entry name" value="GNK2_sf"/>
</dbReference>
<dbReference type="InterPro" id="IPR011009">
    <property type="entry name" value="Kinase-like_dom_sf"/>
</dbReference>
<dbReference type="InterPro" id="IPR000719">
    <property type="entry name" value="Prot_kinase_dom"/>
</dbReference>
<dbReference type="InterPro" id="IPR017441">
    <property type="entry name" value="Protein_kinase_ATP_BS"/>
</dbReference>
<dbReference type="InterPro" id="IPR008271">
    <property type="entry name" value="Ser/Thr_kinase_AS"/>
</dbReference>
<dbReference type="PANTHER" id="PTHR27002:SF528">
    <property type="entry name" value="CYSTEINE-RICH RECEPTOR-LIKE PROTEIN KINASE 37"/>
    <property type="match status" value="1"/>
</dbReference>
<dbReference type="PANTHER" id="PTHR27002">
    <property type="entry name" value="RECEPTOR-LIKE SERINE/THREONINE-PROTEIN KINASE SD1-8"/>
    <property type="match status" value="1"/>
</dbReference>
<dbReference type="Pfam" id="PF00069">
    <property type="entry name" value="Pkinase"/>
    <property type="match status" value="1"/>
</dbReference>
<dbReference type="Pfam" id="PF01657">
    <property type="entry name" value="Stress-antifung"/>
    <property type="match status" value="2"/>
</dbReference>
<dbReference type="SMART" id="SM00220">
    <property type="entry name" value="S_TKc"/>
    <property type="match status" value="1"/>
</dbReference>
<dbReference type="SUPFAM" id="SSF56112">
    <property type="entry name" value="Protein kinase-like (PK-like)"/>
    <property type="match status" value="1"/>
</dbReference>
<dbReference type="PROSITE" id="PS51473">
    <property type="entry name" value="GNK2"/>
    <property type="match status" value="2"/>
</dbReference>
<dbReference type="PROSITE" id="PS00107">
    <property type="entry name" value="PROTEIN_KINASE_ATP"/>
    <property type="match status" value="1"/>
</dbReference>
<dbReference type="PROSITE" id="PS50011">
    <property type="entry name" value="PROTEIN_KINASE_DOM"/>
    <property type="match status" value="1"/>
</dbReference>
<dbReference type="PROSITE" id="PS00108">
    <property type="entry name" value="PROTEIN_KINASE_ST"/>
    <property type="match status" value="1"/>
</dbReference>
<sequence>MGKSCVVTSSFSLLLLFLQTLKYVHAGFICYGDFFNVNYGVSRTYLFSSLPSNVVSNGGFYNASFGRDSKNNRVHVVALCRRGYEKQACKTCLEHVIEDTKSKCPRQKESFSWVTDEFDDVSCSLRYTNHSTLGKLELLPNTINPNPNSIDSKFNNMAMFSQEWIAMVNRTLEAASTAENSSVLKYYSATRTEFTQISDVYALMQCVPDLSPGNCKRCLRECVNDFQKQFWGRQGGGVSRPSCYFRWDLYPYYRAFDNVVRVPAPPPQASSTIIDYGRDEKSFQGSNIAIIVVPSVINLIIFVVLIFSWKRKQSHTIINDVFDSNNGQSMLRFDLRMIVTATNNFSLENKLGQGGFGSVYKGILPSGQEIAVKRLRKGSGQGGMEFKNEVLLLTRLQHRNLVKLLGFCNEKDEEILVYEFVPNSSLDHFIFDEEKRRVLTWDVRYTIIEGVARGLLYLHEDSQLRIIHRDLKASNILLDAEMNPKVADFGMARLFDMDETRGQTSRVVGTYGYMAPEYATYGQFSTKSDVYSFGVMLLEMISGKSNKKLEKEEEEEEEELPAFVWKRWIEGRFAEIIDPLAAPSNNISINEVMKLIHIGLLCVQEDISKRPSINSILFWLERHATITMPVPTPVAYLTRPSLSLGH</sequence>
<reference key="1">
    <citation type="journal article" date="1999" name="Nature">
        <title>Sequence and analysis of chromosome 4 of the plant Arabidopsis thaliana.</title>
        <authorList>
            <person name="Mayer K.F.X."/>
            <person name="Schueller C."/>
            <person name="Wambutt R."/>
            <person name="Murphy G."/>
            <person name="Volckaert G."/>
            <person name="Pohl T."/>
            <person name="Duesterhoeft A."/>
            <person name="Stiekema W."/>
            <person name="Entian K.-D."/>
            <person name="Terryn N."/>
            <person name="Harris B."/>
            <person name="Ansorge W."/>
            <person name="Brandt P."/>
            <person name="Grivell L.A."/>
            <person name="Rieger M."/>
            <person name="Weichselgartner M."/>
            <person name="de Simone V."/>
            <person name="Obermaier B."/>
            <person name="Mache R."/>
            <person name="Mueller M."/>
            <person name="Kreis M."/>
            <person name="Delseny M."/>
            <person name="Puigdomenech P."/>
            <person name="Watson M."/>
            <person name="Schmidtheini T."/>
            <person name="Reichert B."/>
            <person name="Portetelle D."/>
            <person name="Perez-Alonso M."/>
            <person name="Boutry M."/>
            <person name="Bancroft I."/>
            <person name="Vos P."/>
            <person name="Hoheisel J."/>
            <person name="Zimmermann W."/>
            <person name="Wedler H."/>
            <person name="Ridley P."/>
            <person name="Langham S.-A."/>
            <person name="McCullagh B."/>
            <person name="Bilham L."/>
            <person name="Robben J."/>
            <person name="van der Schueren J."/>
            <person name="Grymonprez B."/>
            <person name="Chuang Y.-J."/>
            <person name="Vandenbussche F."/>
            <person name="Braeken M."/>
            <person name="Weltjens I."/>
            <person name="Voet M."/>
            <person name="Bastiaens I."/>
            <person name="Aert R."/>
            <person name="Defoor E."/>
            <person name="Weitzenegger T."/>
            <person name="Bothe G."/>
            <person name="Ramsperger U."/>
            <person name="Hilbert H."/>
            <person name="Braun M."/>
            <person name="Holzer E."/>
            <person name="Brandt A."/>
            <person name="Peters S."/>
            <person name="van Staveren M."/>
            <person name="Dirkse W."/>
            <person name="Mooijman P."/>
            <person name="Klein Lankhorst R."/>
            <person name="Rose M."/>
            <person name="Hauf J."/>
            <person name="Koetter P."/>
            <person name="Berneiser S."/>
            <person name="Hempel S."/>
            <person name="Feldpausch M."/>
            <person name="Lamberth S."/>
            <person name="Van den Daele H."/>
            <person name="De Keyser A."/>
            <person name="Buysshaert C."/>
            <person name="Gielen J."/>
            <person name="Villarroel R."/>
            <person name="De Clercq R."/>
            <person name="van Montagu M."/>
            <person name="Rogers J."/>
            <person name="Cronin A."/>
            <person name="Quail M.A."/>
            <person name="Bray-Allen S."/>
            <person name="Clark L."/>
            <person name="Doggett J."/>
            <person name="Hall S."/>
            <person name="Kay M."/>
            <person name="Lennard N."/>
            <person name="McLay K."/>
            <person name="Mayes R."/>
            <person name="Pettett A."/>
            <person name="Rajandream M.A."/>
            <person name="Lyne M."/>
            <person name="Benes V."/>
            <person name="Rechmann S."/>
            <person name="Borkova D."/>
            <person name="Bloecker H."/>
            <person name="Scharfe M."/>
            <person name="Grimm M."/>
            <person name="Loehnert T.-H."/>
            <person name="Dose S."/>
            <person name="de Haan M."/>
            <person name="Maarse A.C."/>
            <person name="Schaefer M."/>
            <person name="Mueller-Auer S."/>
            <person name="Gabel C."/>
            <person name="Fuchs M."/>
            <person name="Fartmann B."/>
            <person name="Granderath K."/>
            <person name="Dauner D."/>
            <person name="Herzl A."/>
            <person name="Neumann S."/>
            <person name="Argiriou A."/>
            <person name="Vitale D."/>
            <person name="Liguori R."/>
            <person name="Piravandi E."/>
            <person name="Massenet O."/>
            <person name="Quigley F."/>
            <person name="Clabauld G."/>
            <person name="Muendlein A."/>
            <person name="Felber R."/>
            <person name="Schnabl S."/>
            <person name="Hiller R."/>
            <person name="Schmidt W."/>
            <person name="Lecharny A."/>
            <person name="Aubourg S."/>
            <person name="Chefdor F."/>
            <person name="Cooke R."/>
            <person name="Berger C."/>
            <person name="Monfort A."/>
            <person name="Casacuberta E."/>
            <person name="Gibbons T."/>
            <person name="Weber N."/>
            <person name="Vandenbol M."/>
            <person name="Bargues M."/>
            <person name="Terol J."/>
            <person name="Torres A."/>
            <person name="Perez-Perez A."/>
            <person name="Purnelle B."/>
            <person name="Bent E."/>
            <person name="Johnson S."/>
            <person name="Tacon D."/>
            <person name="Jesse T."/>
            <person name="Heijnen L."/>
            <person name="Schwarz S."/>
            <person name="Scholler P."/>
            <person name="Heber S."/>
            <person name="Francs P."/>
            <person name="Bielke C."/>
            <person name="Frishman D."/>
            <person name="Haase D."/>
            <person name="Lemcke K."/>
            <person name="Mewes H.-W."/>
            <person name="Stocker S."/>
            <person name="Zaccaria P."/>
            <person name="Bevan M."/>
            <person name="Wilson R.K."/>
            <person name="de la Bastide M."/>
            <person name="Habermann K."/>
            <person name="Parnell L."/>
            <person name="Dedhia N."/>
            <person name="Gnoj L."/>
            <person name="Schutz K."/>
            <person name="Huang E."/>
            <person name="Spiegel L."/>
            <person name="Sekhon M."/>
            <person name="Murray J."/>
            <person name="Sheet P."/>
            <person name="Cordes M."/>
            <person name="Abu-Threideh J."/>
            <person name="Stoneking T."/>
            <person name="Kalicki J."/>
            <person name="Graves T."/>
            <person name="Harmon G."/>
            <person name="Edwards J."/>
            <person name="Latreille P."/>
            <person name="Courtney L."/>
            <person name="Cloud J."/>
            <person name="Abbott A."/>
            <person name="Scott K."/>
            <person name="Johnson D."/>
            <person name="Minx P."/>
            <person name="Bentley D."/>
            <person name="Fulton B."/>
            <person name="Miller N."/>
            <person name="Greco T."/>
            <person name="Kemp K."/>
            <person name="Kramer J."/>
            <person name="Fulton L."/>
            <person name="Mardis E."/>
            <person name="Dante M."/>
            <person name="Pepin K."/>
            <person name="Hillier L.W."/>
            <person name="Nelson J."/>
            <person name="Spieth J."/>
            <person name="Ryan E."/>
            <person name="Andrews S."/>
            <person name="Geisel C."/>
            <person name="Layman D."/>
            <person name="Du H."/>
            <person name="Ali J."/>
            <person name="Berghoff A."/>
            <person name="Jones K."/>
            <person name="Drone K."/>
            <person name="Cotton M."/>
            <person name="Joshu C."/>
            <person name="Antonoiu B."/>
            <person name="Zidanic M."/>
            <person name="Strong C."/>
            <person name="Sun H."/>
            <person name="Lamar B."/>
            <person name="Yordan C."/>
            <person name="Ma P."/>
            <person name="Zhong J."/>
            <person name="Preston R."/>
            <person name="Vil D."/>
            <person name="Shekher M."/>
            <person name="Matero A."/>
            <person name="Shah R."/>
            <person name="Swaby I.K."/>
            <person name="O'Shaughnessy A."/>
            <person name="Rodriguez M."/>
            <person name="Hoffman J."/>
            <person name="Till S."/>
            <person name="Granat S."/>
            <person name="Shohdy N."/>
            <person name="Hasegawa A."/>
            <person name="Hameed A."/>
            <person name="Lodhi M."/>
            <person name="Johnson A."/>
            <person name="Chen E."/>
            <person name="Marra M.A."/>
            <person name="Martienssen R."/>
            <person name="McCombie W.R."/>
        </authorList>
    </citation>
    <scope>NUCLEOTIDE SEQUENCE [LARGE SCALE GENOMIC DNA]</scope>
    <source>
        <strain>cv. Columbia</strain>
    </source>
</reference>
<reference key="2">
    <citation type="journal article" date="2017" name="Plant J.">
        <title>Araport11: a complete reannotation of the Arabidopsis thaliana reference genome.</title>
        <authorList>
            <person name="Cheng C.Y."/>
            <person name="Krishnakumar V."/>
            <person name="Chan A.P."/>
            <person name="Thibaud-Nissen F."/>
            <person name="Schobel S."/>
            <person name="Town C.D."/>
        </authorList>
    </citation>
    <scope>GENOME REANNOTATION</scope>
    <source>
        <strain>cv. Columbia</strain>
    </source>
</reference>
<reference key="3">
    <citation type="journal article" date="2001" name="Plant Physiol.">
        <title>A superfamily of proteins with novel cysteine-rich repeats.</title>
        <authorList>
            <person name="Chen Z."/>
        </authorList>
    </citation>
    <scope>GENE FAMILY ORGANIZATION</scope>
    <scope>NOMENCLATURE</scope>
</reference>
<evidence type="ECO:0000250" key="1">
    <source>
        <dbReference type="UniProtKB" id="O48814"/>
    </source>
</evidence>
<evidence type="ECO:0000255" key="2"/>
<evidence type="ECO:0000255" key="3">
    <source>
        <dbReference type="PROSITE-ProRule" id="PRU00159"/>
    </source>
</evidence>
<evidence type="ECO:0000255" key="4">
    <source>
        <dbReference type="PROSITE-ProRule" id="PRU00806"/>
    </source>
</evidence>
<evidence type="ECO:0000255" key="5">
    <source>
        <dbReference type="PROSITE-ProRule" id="PRU10027"/>
    </source>
</evidence>
<evidence type="ECO:0000305" key="6"/>
<name>CRK37_ARATH</name>
<organism>
    <name type="scientific">Arabidopsis thaliana</name>
    <name type="common">Mouse-ear cress</name>
    <dbReference type="NCBI Taxonomy" id="3702"/>
    <lineage>
        <taxon>Eukaryota</taxon>
        <taxon>Viridiplantae</taxon>
        <taxon>Streptophyta</taxon>
        <taxon>Embryophyta</taxon>
        <taxon>Tracheophyta</taxon>
        <taxon>Spermatophyta</taxon>
        <taxon>Magnoliopsida</taxon>
        <taxon>eudicotyledons</taxon>
        <taxon>Gunneridae</taxon>
        <taxon>Pentapetalae</taxon>
        <taxon>rosids</taxon>
        <taxon>malvids</taxon>
        <taxon>Brassicales</taxon>
        <taxon>Brassicaceae</taxon>
        <taxon>Camelineae</taxon>
        <taxon>Arabidopsis</taxon>
    </lineage>
</organism>
<gene>
    <name type="primary">CRK37</name>
    <name type="ordered locus">At4g04500</name>
    <name type="ORF">T26N6.11</name>
</gene>
<protein>
    <recommendedName>
        <fullName>Cysteine-rich receptor-like protein kinase 37</fullName>
        <shortName>Cysteine-rich RLK37</shortName>
        <ecNumber>2.7.11.-</ecNumber>
    </recommendedName>
</protein>
<feature type="signal peptide" evidence="2">
    <location>
        <begin position="1"/>
        <end position="26"/>
    </location>
</feature>
<feature type="chain" id="PRO_0000295084" description="Cysteine-rich receptor-like protein kinase 37">
    <location>
        <begin position="27"/>
        <end position="646"/>
    </location>
</feature>
<feature type="topological domain" description="Extracellular" evidence="2">
    <location>
        <begin position="27"/>
        <end position="287"/>
    </location>
</feature>
<feature type="transmembrane region" description="Helical" evidence="2">
    <location>
        <begin position="288"/>
        <end position="308"/>
    </location>
</feature>
<feature type="topological domain" description="Cytoplasmic" evidence="2">
    <location>
        <begin position="309"/>
        <end position="646"/>
    </location>
</feature>
<feature type="domain" description="Gnk2-homologous 1" evidence="4">
    <location>
        <begin position="27"/>
        <end position="132"/>
    </location>
</feature>
<feature type="domain" description="Gnk2-homologous 2" evidence="4">
    <location>
        <begin position="142"/>
        <end position="252"/>
    </location>
</feature>
<feature type="domain" description="Protein kinase" evidence="3">
    <location>
        <begin position="345"/>
        <end position="626"/>
    </location>
</feature>
<feature type="active site" description="Proton acceptor" evidence="3 5">
    <location>
        <position position="470"/>
    </location>
</feature>
<feature type="binding site" evidence="3">
    <location>
        <begin position="351"/>
        <end position="359"/>
    </location>
    <ligand>
        <name>ATP</name>
        <dbReference type="ChEBI" id="CHEBI:30616"/>
    </ligand>
</feature>
<feature type="binding site" evidence="3">
    <location>
        <position position="373"/>
    </location>
    <ligand>
        <name>ATP</name>
        <dbReference type="ChEBI" id="CHEBI:30616"/>
    </ligand>
</feature>
<feature type="modified residue" description="Phosphotyrosine" evidence="1">
    <location>
        <position position="418"/>
    </location>
</feature>
<feature type="modified residue" description="Phosphoserine" evidence="1">
    <location>
        <position position="474"/>
    </location>
</feature>
<feature type="modified residue" description="Phosphothreonine" evidence="1">
    <location>
        <position position="510"/>
    </location>
</feature>
<feature type="modified residue" description="Phosphotyrosine" evidence="1">
    <location>
        <position position="518"/>
    </location>
</feature>
<feature type="glycosylation site" description="N-linked (GlcNAc...) asparagine" evidence="2">
    <location>
        <position position="62"/>
    </location>
</feature>
<feature type="glycosylation site" description="N-linked (GlcNAc...) asparagine" evidence="2">
    <location>
        <position position="129"/>
    </location>
</feature>
<feature type="glycosylation site" description="N-linked (GlcNAc...) asparagine" evidence="2">
    <location>
        <position position="169"/>
    </location>
</feature>
<feature type="glycosylation site" description="N-linked (GlcNAc...) asparagine" evidence="2">
    <location>
        <position position="180"/>
    </location>
</feature>
<proteinExistence type="inferred from homology"/>
<keyword id="KW-0067">ATP-binding</keyword>
<keyword id="KW-0325">Glycoprotein</keyword>
<keyword id="KW-0418">Kinase</keyword>
<keyword id="KW-0472">Membrane</keyword>
<keyword id="KW-0547">Nucleotide-binding</keyword>
<keyword id="KW-0597">Phosphoprotein</keyword>
<keyword id="KW-0675">Receptor</keyword>
<keyword id="KW-1185">Reference proteome</keyword>
<keyword id="KW-0677">Repeat</keyword>
<keyword id="KW-0723">Serine/threonine-protein kinase</keyword>
<keyword id="KW-0732">Signal</keyword>
<keyword id="KW-0808">Transferase</keyword>
<keyword id="KW-0812">Transmembrane</keyword>
<keyword id="KW-1133">Transmembrane helix</keyword>
<comment type="catalytic activity">
    <reaction>
        <text>L-seryl-[protein] + ATP = O-phospho-L-seryl-[protein] + ADP + H(+)</text>
        <dbReference type="Rhea" id="RHEA:17989"/>
        <dbReference type="Rhea" id="RHEA-COMP:9863"/>
        <dbReference type="Rhea" id="RHEA-COMP:11604"/>
        <dbReference type="ChEBI" id="CHEBI:15378"/>
        <dbReference type="ChEBI" id="CHEBI:29999"/>
        <dbReference type="ChEBI" id="CHEBI:30616"/>
        <dbReference type="ChEBI" id="CHEBI:83421"/>
        <dbReference type="ChEBI" id="CHEBI:456216"/>
    </reaction>
</comment>
<comment type="catalytic activity">
    <reaction>
        <text>L-threonyl-[protein] + ATP = O-phospho-L-threonyl-[protein] + ADP + H(+)</text>
        <dbReference type="Rhea" id="RHEA:46608"/>
        <dbReference type="Rhea" id="RHEA-COMP:11060"/>
        <dbReference type="Rhea" id="RHEA-COMP:11605"/>
        <dbReference type="ChEBI" id="CHEBI:15378"/>
        <dbReference type="ChEBI" id="CHEBI:30013"/>
        <dbReference type="ChEBI" id="CHEBI:30616"/>
        <dbReference type="ChEBI" id="CHEBI:61977"/>
        <dbReference type="ChEBI" id="CHEBI:456216"/>
    </reaction>
</comment>
<comment type="subcellular location">
    <subcellularLocation>
        <location evidence="6">Membrane</location>
        <topology evidence="6">Single-pass membrane protein</topology>
    </subcellularLocation>
</comment>
<comment type="similarity">
    <text evidence="3">Belongs to the protein kinase superfamily. Ser/Thr protein kinase family. CRK subfamily.</text>
</comment>